<feature type="chain" id="PRO_0000078872" description="Matrix protein 1">
    <location>
        <begin position="1"/>
        <end position="248"/>
    </location>
</feature>
<feature type="region of interest" description="Membrane-binding" evidence="1">
    <location>
        <begin position="1"/>
        <end position="164"/>
    </location>
</feature>
<feature type="region of interest" description="RNP-binding" evidence="1">
    <location>
        <begin position="165"/>
        <end position="248"/>
    </location>
</feature>
<feature type="short sequence motif" description="Nuclear localization signal" evidence="1">
    <location>
        <begin position="101"/>
        <end position="105"/>
    </location>
</feature>
<accession>P03489</accession>
<organism>
    <name type="scientific">Influenza B virus (strain B/Lee/1940)</name>
    <dbReference type="NCBI Taxonomy" id="518987"/>
    <lineage>
        <taxon>Viruses</taxon>
        <taxon>Riboviria</taxon>
        <taxon>Orthornavirae</taxon>
        <taxon>Negarnaviricota</taxon>
        <taxon>Polyploviricotina</taxon>
        <taxon>Insthoviricetes</taxon>
        <taxon>Articulavirales</taxon>
        <taxon>Orthomyxoviridae</taxon>
        <taxon>Betainfluenzavirus</taxon>
        <taxon>Betainfluenzavirus influenzae</taxon>
        <taxon>Influenza B virus</taxon>
    </lineage>
</organism>
<protein>
    <recommendedName>
        <fullName evidence="1">Matrix protein 1</fullName>
        <shortName evidence="1">M1</shortName>
    </recommendedName>
</protein>
<comment type="function">
    <text evidence="1">Plays critical roles in virus replication, from virus entry and uncoating to assembly and budding of the virus particle. M1 binding to ribonucleocapsids (RNPs) in nucleus seems to inhibit viral transcription. Interaction of viral NEP with M1-RNP is thought to promote nuclear export of the complex, which is targeted to the virion assembly site at the apical plasma membrane in polarized epithelial cells. Interactions with NA and HA may bring M1, a non-raft-associated protein, into lipid rafts. Forms a continuous shell on the inner side of the lipid bilayer in virion, where it binds the RNP. During virus entry into cell, the M2 ion channel acidifies the internal virion core, inducing M1 dissociation from the RNP. M1-free RNPs are transported to the nucleus, where viral transcription and replication can take place.</text>
</comment>
<comment type="function">
    <text evidence="1">Determines the virion's shape: spherical or filamentous. Clinical isolates of influenza are characterized by the presence of significant proportion of filamentous virions, whereas after multiple passage on eggs or cell culture, virions have only spherical morphology. Filamentous virions are thought to be important to infect neighboring cells, and spherical virions more suited to spread through aerosol between hosts organisms.</text>
</comment>
<comment type="subunit">
    <text evidence="1">Homodimer and homomultimer. Interacts with NEP. Binds ribonucleocapsid by both interacting with genomic RNA and NP protein. May interact with HA and NA. Cannot bind NP without genomic RNA.</text>
</comment>
<comment type="subcellular location">
    <subcellularLocation>
        <location evidence="1">Virion membrane</location>
        <topology evidence="1">Peripheral membrane protein</topology>
        <orientation evidence="1">Cytoplasmic side</orientation>
    </subcellularLocation>
    <subcellularLocation>
        <location evidence="1">Host nucleus</location>
    </subcellularLocation>
</comment>
<comment type="miscellaneous">
    <text>Influenza B virus genome RNA segment 7 encodes the M1 and BM2 (AC P03493) proteins. Normal translation produces the M1 protein. The M1 termination codon overlaps the BM2 initiation codon in an overlapping stop-start pentanucleotide 5'-UAAUG-3'. Termination of M1 translation triggers reinitiation on the BM2 AUG in the +2 open reading frame.</text>
</comment>
<comment type="miscellaneous">
    <text evidence="1">Most abundant protein in virion. When expressed alone can form virus-like particles in transfected cells.</text>
</comment>
<comment type="similarity">
    <text evidence="1">Belongs to the influenza viruses Matrix protein M1 family.</text>
</comment>
<evidence type="ECO:0000255" key="1">
    <source>
        <dbReference type="HAMAP-Rule" id="MF_04068"/>
    </source>
</evidence>
<name>M1_INBLE</name>
<proteinExistence type="inferred from homology"/>
<organismHost>
    <name type="scientific">Homo sapiens</name>
    <name type="common">Human</name>
    <dbReference type="NCBI Taxonomy" id="9606"/>
</organismHost>
<sequence>MSLFGDTIAYLLSLIEDGEGKAELAEKLHCWFGGKEFDLDSALEWIKNKRCLTDIQKALIGASICFLKPKDQERKRRFITEPLSGMGTTATKKKGLILAERKMRRCVSFHEAFEIAEGHESSALLYCLMVMYLNPENYSMQVKLGTLCALCEKQASHSHRAHSRAARSSVPGVRREMQMVSAMNTAKTMNGMGKGEDVQKLAEELQNNIGVLRSLGASQKNGEGIAKDVMEVLKQSSMGNSALVRKYL</sequence>
<gene>
    <name evidence="1" type="primary">M</name>
</gene>
<dbReference type="EMBL" id="J02094">
    <property type="protein sequence ID" value="AAA43726.1"/>
    <property type="molecule type" value="Genomic_RNA"/>
</dbReference>
<dbReference type="PIR" id="A04082">
    <property type="entry name" value="MFIV1"/>
</dbReference>
<dbReference type="SMR" id="P03489"/>
<dbReference type="KEGG" id="vg:26824006"/>
<dbReference type="OrthoDB" id="6929at10239"/>
<dbReference type="Proteomes" id="UP000008158">
    <property type="component" value="Genome"/>
</dbReference>
<dbReference type="GO" id="GO:0042025">
    <property type="term" value="C:host cell nucleus"/>
    <property type="evidence" value="ECO:0007669"/>
    <property type="project" value="UniProtKB-SubCell"/>
</dbReference>
<dbReference type="GO" id="GO:0016020">
    <property type="term" value="C:membrane"/>
    <property type="evidence" value="ECO:0007669"/>
    <property type="project" value="UniProtKB-KW"/>
</dbReference>
<dbReference type="GO" id="GO:0055036">
    <property type="term" value="C:virion membrane"/>
    <property type="evidence" value="ECO:0007669"/>
    <property type="project" value="UniProtKB-SubCell"/>
</dbReference>
<dbReference type="GO" id="GO:0003723">
    <property type="term" value="F:RNA binding"/>
    <property type="evidence" value="ECO:0007669"/>
    <property type="project" value="UniProtKB-UniRule"/>
</dbReference>
<dbReference type="GO" id="GO:0039660">
    <property type="term" value="F:structural constituent of virion"/>
    <property type="evidence" value="ECO:0007669"/>
    <property type="project" value="UniProtKB-UniRule"/>
</dbReference>
<dbReference type="GO" id="GO:0046761">
    <property type="term" value="P:viral budding from plasma membrane"/>
    <property type="evidence" value="ECO:0007669"/>
    <property type="project" value="UniProtKB-UniRule"/>
</dbReference>
<dbReference type="Gene3D" id="1.10.10.180">
    <property type="match status" value="1"/>
</dbReference>
<dbReference type="Gene3D" id="1.20.91.10">
    <property type="match status" value="1"/>
</dbReference>
<dbReference type="HAMAP" id="MF_04068">
    <property type="entry name" value="INFV_M1"/>
    <property type="match status" value="1"/>
</dbReference>
<dbReference type="InterPro" id="IPR036039">
    <property type="entry name" value="Flu_matrix_M1"/>
</dbReference>
<dbReference type="InterPro" id="IPR013188">
    <property type="entry name" value="Flu_matrix_M1_C"/>
</dbReference>
<dbReference type="InterPro" id="IPR001561">
    <property type="entry name" value="Flu_matrix_M1_N"/>
</dbReference>
<dbReference type="InterPro" id="IPR015423">
    <property type="entry name" value="Flu_matrix_M1_N_sub1"/>
</dbReference>
<dbReference type="InterPro" id="IPR015799">
    <property type="entry name" value="Flu_matrix_M1_N_sub2"/>
</dbReference>
<dbReference type="InterPro" id="IPR037533">
    <property type="entry name" value="INFV_M1"/>
</dbReference>
<dbReference type="Pfam" id="PF00598">
    <property type="entry name" value="Flu_M1"/>
    <property type="match status" value="1"/>
</dbReference>
<dbReference type="Pfam" id="PF08289">
    <property type="entry name" value="Flu_M1_C"/>
    <property type="match status" value="1"/>
</dbReference>
<dbReference type="SMART" id="SM00759">
    <property type="entry name" value="Flu_M1_C"/>
    <property type="match status" value="1"/>
</dbReference>
<dbReference type="SUPFAM" id="SSF48145">
    <property type="entry name" value="Influenza virus matrix protein M1"/>
    <property type="match status" value="1"/>
</dbReference>
<keyword id="KW-1048">Host nucleus</keyword>
<keyword id="KW-0472">Membrane</keyword>
<keyword id="KW-1185">Reference proteome</keyword>
<keyword id="KW-0694">RNA-binding</keyword>
<keyword id="KW-0468">Viral matrix protein</keyword>
<keyword id="KW-0946">Virion</keyword>
<reference key="1">
    <citation type="journal article" date="1982" name="Virology">
        <title>Sequence of RNA segment 7 of the influenza B virus genome: partial amino acid homology between the membrane proteins (M1) of influenza A and B viruses and conservation of a second open reading frame.</title>
        <authorList>
            <person name="Briedis D.J."/>
            <person name="Lamb R.A."/>
            <person name="Choppin P.W."/>
        </authorList>
    </citation>
    <scope>NUCLEOTIDE SEQUENCE [GENOMIC RNA]</scope>
</reference>